<reference key="1">
    <citation type="submission" date="2006-08" db="EMBL/GenBank/DDBJ databases">
        <authorList>
            <consortium name="NIH - Zebrafish Gene Collection (ZGC) project"/>
        </authorList>
    </citation>
    <scope>NUCLEOTIDE SEQUENCE [LARGE SCALE MRNA]</scope>
    <source>
        <strain>AB</strain>
    </source>
</reference>
<proteinExistence type="evidence at transcript level"/>
<protein>
    <recommendedName>
        <fullName evidence="2">Medium-chain acyl-CoA ligase ACSF2, mitochondrial</fullName>
        <ecNumber evidence="2">6.2.1.2</ecNumber>
    </recommendedName>
</protein>
<dbReference type="EC" id="6.2.1.2" evidence="2"/>
<dbReference type="EMBL" id="BC122098">
    <property type="protein sequence ID" value="AAI22099.1"/>
    <property type="molecule type" value="mRNA"/>
</dbReference>
<dbReference type="SMR" id="Q0P4F7"/>
<dbReference type="FunCoup" id="Q0P4F7">
    <property type="interactions" value="928"/>
</dbReference>
<dbReference type="STRING" id="7955.ENSDARP00000081474"/>
<dbReference type="PaxDb" id="7955-ENSDARP00000081474"/>
<dbReference type="AGR" id="ZFIN:ZDB-GENE-060825-7"/>
<dbReference type="ZFIN" id="ZDB-GENE-060825-7">
    <property type="gene designation" value="acsf2"/>
</dbReference>
<dbReference type="eggNOG" id="KOG1177">
    <property type="taxonomic scope" value="Eukaryota"/>
</dbReference>
<dbReference type="InParanoid" id="Q0P4F7"/>
<dbReference type="OrthoDB" id="10253115at2759"/>
<dbReference type="PhylomeDB" id="Q0P4F7"/>
<dbReference type="Reactome" id="R-DRE-77289">
    <property type="pathway name" value="Mitochondrial Fatty Acid Beta-Oxidation"/>
</dbReference>
<dbReference type="PRO" id="PR:Q0P4F7"/>
<dbReference type="Proteomes" id="UP000000437">
    <property type="component" value="Unplaced"/>
</dbReference>
<dbReference type="GO" id="GO:0005739">
    <property type="term" value="C:mitochondrion"/>
    <property type="evidence" value="ECO:0007669"/>
    <property type="project" value="UniProtKB-SubCell"/>
</dbReference>
<dbReference type="GO" id="GO:0005524">
    <property type="term" value="F:ATP binding"/>
    <property type="evidence" value="ECO:0007669"/>
    <property type="project" value="UniProtKB-KW"/>
</dbReference>
<dbReference type="GO" id="GO:0031956">
    <property type="term" value="F:medium-chain fatty acid-CoA ligase activity"/>
    <property type="evidence" value="ECO:0000250"/>
    <property type="project" value="UniProtKB"/>
</dbReference>
<dbReference type="GO" id="GO:0006631">
    <property type="term" value="P:fatty acid metabolic process"/>
    <property type="evidence" value="ECO:0000318"/>
    <property type="project" value="GO_Central"/>
</dbReference>
<dbReference type="CDD" id="cd05917">
    <property type="entry name" value="FACL_like_2"/>
    <property type="match status" value="1"/>
</dbReference>
<dbReference type="FunFam" id="3.30.300.30:FF:000008">
    <property type="entry name" value="2,3-dihydroxybenzoate-AMP ligase"/>
    <property type="match status" value="1"/>
</dbReference>
<dbReference type="FunFam" id="3.40.50.12780:FF:000003">
    <property type="entry name" value="Long-chain-fatty-acid--CoA ligase FadD"/>
    <property type="match status" value="1"/>
</dbReference>
<dbReference type="Gene3D" id="3.30.300.30">
    <property type="match status" value="1"/>
</dbReference>
<dbReference type="Gene3D" id="3.40.50.12780">
    <property type="entry name" value="N-terminal domain of ligase-like"/>
    <property type="match status" value="1"/>
</dbReference>
<dbReference type="InterPro" id="IPR025110">
    <property type="entry name" value="AMP-bd_C"/>
</dbReference>
<dbReference type="InterPro" id="IPR045851">
    <property type="entry name" value="AMP-bd_C_sf"/>
</dbReference>
<dbReference type="InterPro" id="IPR020845">
    <property type="entry name" value="AMP-binding_CS"/>
</dbReference>
<dbReference type="InterPro" id="IPR000873">
    <property type="entry name" value="AMP-dep_synth/lig_dom"/>
</dbReference>
<dbReference type="InterPro" id="IPR042099">
    <property type="entry name" value="ANL_N_sf"/>
</dbReference>
<dbReference type="PANTHER" id="PTHR43201">
    <property type="entry name" value="ACYL-COA SYNTHETASE"/>
    <property type="match status" value="1"/>
</dbReference>
<dbReference type="PANTHER" id="PTHR43201:SF5">
    <property type="entry name" value="MEDIUM-CHAIN ACYL-COA LIGASE ACSF2, MITOCHONDRIAL"/>
    <property type="match status" value="1"/>
</dbReference>
<dbReference type="Pfam" id="PF00501">
    <property type="entry name" value="AMP-binding"/>
    <property type="match status" value="1"/>
</dbReference>
<dbReference type="Pfam" id="PF13193">
    <property type="entry name" value="AMP-binding_C"/>
    <property type="match status" value="1"/>
</dbReference>
<dbReference type="SUPFAM" id="SSF56801">
    <property type="entry name" value="Acetyl-CoA synthetase-like"/>
    <property type="match status" value="1"/>
</dbReference>
<dbReference type="PROSITE" id="PS00455">
    <property type="entry name" value="AMP_BINDING"/>
    <property type="match status" value="1"/>
</dbReference>
<keyword id="KW-0067">ATP-binding</keyword>
<keyword id="KW-0276">Fatty acid metabolism</keyword>
<keyword id="KW-0436">Ligase</keyword>
<keyword id="KW-0443">Lipid metabolism</keyword>
<keyword id="KW-0496">Mitochondrion</keyword>
<keyword id="KW-0547">Nucleotide-binding</keyword>
<keyword id="KW-1185">Reference proteome</keyword>
<keyword id="KW-0809">Transit peptide</keyword>
<comment type="function">
    <text evidence="2">Acyl-CoA synthases catalyze the initial reaction in fatty acid metabolism, by forming a thioester with CoA. Has some preference toward medium-chain substrates. Plays a role in adipocyte differentiation.</text>
</comment>
<comment type="catalytic activity">
    <reaction evidence="2">
        <text>a medium-chain fatty acid + ATP + CoA = a medium-chain fatty acyl-CoA + AMP + diphosphate</text>
        <dbReference type="Rhea" id="RHEA:48340"/>
        <dbReference type="ChEBI" id="CHEBI:30616"/>
        <dbReference type="ChEBI" id="CHEBI:33019"/>
        <dbReference type="ChEBI" id="CHEBI:57287"/>
        <dbReference type="ChEBI" id="CHEBI:59558"/>
        <dbReference type="ChEBI" id="CHEBI:90546"/>
        <dbReference type="ChEBI" id="CHEBI:456215"/>
        <dbReference type="EC" id="6.2.1.2"/>
    </reaction>
</comment>
<comment type="catalytic activity">
    <reaction evidence="2">
        <text>octanoate + ATP + CoA = octanoyl-CoA + AMP + diphosphate</text>
        <dbReference type="Rhea" id="RHEA:33631"/>
        <dbReference type="ChEBI" id="CHEBI:25646"/>
        <dbReference type="ChEBI" id="CHEBI:30616"/>
        <dbReference type="ChEBI" id="CHEBI:33019"/>
        <dbReference type="ChEBI" id="CHEBI:57287"/>
        <dbReference type="ChEBI" id="CHEBI:57386"/>
        <dbReference type="ChEBI" id="CHEBI:456215"/>
    </reaction>
</comment>
<comment type="subcellular location">
    <subcellularLocation>
        <location evidence="4">Mitochondrion</location>
    </subcellularLocation>
</comment>
<comment type="similarity">
    <text evidence="4">Belongs to the ATP-dependent AMP-binding enzyme family.</text>
</comment>
<feature type="transit peptide" description="Mitochondrion" evidence="3">
    <location>
        <begin position="1"/>
        <end position="13"/>
    </location>
</feature>
<feature type="chain" id="PRO_0000315798" description="Medium-chain acyl-CoA ligase ACSF2, mitochondrial">
    <location>
        <begin position="14"/>
        <end position="606"/>
    </location>
</feature>
<feature type="binding site" evidence="1">
    <location>
        <begin position="256"/>
        <end position="264"/>
    </location>
    <ligand>
        <name>ATP</name>
        <dbReference type="ChEBI" id="CHEBI:30616"/>
    </ligand>
</feature>
<feature type="binding site" evidence="1">
    <location>
        <position position="484"/>
    </location>
    <ligand>
        <name>ATP</name>
        <dbReference type="ChEBI" id="CHEBI:30616"/>
    </ligand>
</feature>
<feature type="binding site" evidence="1">
    <location>
        <position position="499"/>
    </location>
    <ligand>
        <name>ATP</name>
        <dbReference type="ChEBI" id="CHEBI:30616"/>
    </ligand>
</feature>
<feature type="binding site" evidence="1">
    <location>
        <position position="590"/>
    </location>
    <ligand>
        <name>ATP</name>
        <dbReference type="ChEBI" id="CHEBI:30616"/>
    </ligand>
</feature>
<accession>Q0P4F7</accession>
<sequence>MSSKILLTNLRTSASFCKTLKFPQRPRTPFIASQQSCAIHVDNPPSIPTLTTSYVHGLSSHPLQSSTVDQCLQATVERYPDREAMVFVQDGIRKTFAEFYQDVEKAAAGLLAAGLKRGDRLGMWGPNIYEWVLMQFATAKAGIILVAVNPAYQLQEVEFALRKVQCNAVVCPTKFKSQHYCDMLKQLCPEMETASPGGIKSSRLPDLHTVIVTDSQQPGSFLLKDLMQAGSSQHYQQLQDLQKKLVCDDPINIQFTSGTTGKPKGATLSHHNIVNNAYFTGMRIGYNWRKNVRICLPVPLYHCFGSVGGGVIMALYGTTVIFPSTGYDGRANLRAIEKEKCTFVYGTPTMYIDMLGQPDLAKFDLSSVRGGIAAGSPCPPEVMRKILNVMGIKEMVIGYGTTENSPVTFCGFPVDSAERKIVTVGCISPHTEAKVVDPTTGEIVPLGAQGELMIRGYCVMLEYWQDEEKTRECITKDRWYKTGDIASLDQFAYCKIEGRIKDLIIRGGENIYPAEIEQFLHTHPKILEAQVVGVKDERMGEEVCACIRLKEGQECTVEEIKAYCKGKIAHYKVPRYILFVQDYPLTITGKIQKHKLRERTEKQLGL</sequence>
<name>ACSF2_DANRE</name>
<organism>
    <name type="scientific">Danio rerio</name>
    <name type="common">Zebrafish</name>
    <name type="synonym">Brachydanio rerio</name>
    <dbReference type="NCBI Taxonomy" id="7955"/>
    <lineage>
        <taxon>Eukaryota</taxon>
        <taxon>Metazoa</taxon>
        <taxon>Chordata</taxon>
        <taxon>Craniata</taxon>
        <taxon>Vertebrata</taxon>
        <taxon>Euteleostomi</taxon>
        <taxon>Actinopterygii</taxon>
        <taxon>Neopterygii</taxon>
        <taxon>Teleostei</taxon>
        <taxon>Ostariophysi</taxon>
        <taxon>Cypriniformes</taxon>
        <taxon>Danionidae</taxon>
        <taxon>Danioninae</taxon>
        <taxon>Danio</taxon>
    </lineage>
</organism>
<gene>
    <name evidence="2" type="primary">acsf2</name>
    <name type="ORF">zgc:152887</name>
</gene>
<evidence type="ECO:0000250" key="1"/>
<evidence type="ECO:0000250" key="2">
    <source>
        <dbReference type="UniProtKB" id="Q96CM8"/>
    </source>
</evidence>
<evidence type="ECO:0000255" key="3"/>
<evidence type="ECO:0000305" key="4"/>